<organism>
    <name type="scientific">Calycanthus floridus</name>
    <name type="common">Eastern sweetshrub</name>
    <dbReference type="NCBI Taxonomy" id="3429"/>
    <lineage>
        <taxon>Eukaryota</taxon>
        <taxon>Viridiplantae</taxon>
        <taxon>Streptophyta</taxon>
        <taxon>Embryophyta</taxon>
        <taxon>Tracheophyta</taxon>
        <taxon>Spermatophyta</taxon>
        <taxon>Magnoliopsida</taxon>
        <taxon>Magnoliidae</taxon>
        <taxon>Laurales</taxon>
        <taxon>Calycanthaceae</taxon>
        <taxon>Calycanthus</taxon>
    </lineage>
</organism>
<proteinExistence type="inferred from homology"/>
<geneLocation type="chloroplast"/>
<name>PSBN_CALFL</name>
<dbReference type="EMBL" id="AF123846">
    <property type="protein sequence ID" value="AAG26263.1"/>
    <property type="molecule type" value="Genomic_DNA"/>
</dbReference>
<dbReference type="GO" id="GO:0009535">
    <property type="term" value="C:chloroplast thylakoid membrane"/>
    <property type="evidence" value="ECO:0007669"/>
    <property type="project" value="UniProtKB-SubCell"/>
</dbReference>
<dbReference type="GO" id="GO:0015979">
    <property type="term" value="P:photosynthesis"/>
    <property type="evidence" value="ECO:0007669"/>
    <property type="project" value="InterPro"/>
</dbReference>
<dbReference type="HAMAP" id="MF_00293">
    <property type="entry name" value="PSII_PsbN"/>
    <property type="match status" value="1"/>
</dbReference>
<dbReference type="InterPro" id="IPR003398">
    <property type="entry name" value="PSII_PsbN"/>
</dbReference>
<dbReference type="PANTHER" id="PTHR35326">
    <property type="entry name" value="PROTEIN PSBN"/>
    <property type="match status" value="1"/>
</dbReference>
<dbReference type="PANTHER" id="PTHR35326:SF3">
    <property type="entry name" value="PROTEIN PSBN"/>
    <property type="match status" value="1"/>
</dbReference>
<dbReference type="Pfam" id="PF02468">
    <property type="entry name" value="PsbN"/>
    <property type="match status" value="1"/>
</dbReference>
<gene>
    <name evidence="1" type="primary">psbN</name>
</gene>
<comment type="function">
    <text evidence="1">May play a role in photosystem I and II biogenesis.</text>
</comment>
<comment type="subcellular location">
    <subcellularLocation>
        <location evidence="1">Plastid</location>
        <location evidence="1">Chloroplast thylakoid membrane</location>
        <topology evidence="1">Single-pass membrane protein</topology>
    </subcellularLocation>
</comment>
<comment type="similarity">
    <text evidence="1">Belongs to the PsbN family.</text>
</comment>
<comment type="caution">
    <text evidence="1">Originally thought to be a component of PSII; based on experiments in Synechocystis, N.tabacum and barley, and its absence from PSII in T.elongatus and T.vulcanus, this is probably not true.</text>
</comment>
<keyword id="KW-0150">Chloroplast</keyword>
<keyword id="KW-0472">Membrane</keyword>
<keyword id="KW-0934">Plastid</keyword>
<keyword id="KW-0793">Thylakoid</keyword>
<keyword id="KW-0812">Transmembrane</keyword>
<keyword id="KW-1133">Transmembrane helix</keyword>
<evidence type="ECO:0000255" key="1">
    <source>
        <dbReference type="HAMAP-Rule" id="MF_00293"/>
    </source>
</evidence>
<protein>
    <recommendedName>
        <fullName evidence="1">Protein PsbN</fullName>
    </recommendedName>
</protein>
<sequence length="43" mass="4676">METATLVXISISGSLVSFTGYALYTAFGQPSQQLRDPFEEHGD</sequence>
<accession>Q9GFA1</accession>
<feature type="chain" id="PRO_0000207878" description="Protein PsbN">
    <location>
        <begin position="1"/>
        <end position="43"/>
    </location>
</feature>
<feature type="transmembrane region" description="Helical" evidence="1">
    <location>
        <begin position="5"/>
        <end position="27"/>
    </location>
</feature>
<reference key="1">
    <citation type="journal article" date="2000" name="Am. J. Bot.">
        <title>Utility of 17 chloroplast genes for inferring the phylogeny of the basal angiosperms.</title>
        <authorList>
            <person name="Graham S.W."/>
            <person name="Olmstead R.G."/>
        </authorList>
    </citation>
    <scope>NUCLEOTIDE SEQUENCE [GENOMIC DNA]</scope>
</reference>